<gene>
    <name evidence="1" type="primary">rpsR</name>
    <name type="ordered locus">HH_0538</name>
</gene>
<keyword id="KW-1185">Reference proteome</keyword>
<keyword id="KW-0687">Ribonucleoprotein</keyword>
<keyword id="KW-0689">Ribosomal protein</keyword>
<keyword id="KW-0694">RNA-binding</keyword>
<keyword id="KW-0699">rRNA-binding</keyword>
<accession>Q7VIR6</accession>
<proteinExistence type="inferred from homology"/>
<organism>
    <name type="scientific">Helicobacter hepaticus (strain ATCC 51449 / 3B1)</name>
    <dbReference type="NCBI Taxonomy" id="235279"/>
    <lineage>
        <taxon>Bacteria</taxon>
        <taxon>Pseudomonadati</taxon>
        <taxon>Campylobacterota</taxon>
        <taxon>Epsilonproteobacteria</taxon>
        <taxon>Campylobacterales</taxon>
        <taxon>Helicobacteraceae</taxon>
        <taxon>Helicobacter</taxon>
    </lineage>
</organism>
<comment type="function">
    <text evidence="1">Binds as a heterodimer with protein bS6 to the central domain of the 16S rRNA, where it helps stabilize the platform of the 30S subunit.</text>
</comment>
<comment type="subunit">
    <text evidence="1">Part of the 30S ribosomal subunit. Forms a tight heterodimer with protein bS6.</text>
</comment>
<comment type="similarity">
    <text evidence="1">Belongs to the bacterial ribosomal protein bS18 family.</text>
</comment>
<comment type="sequence caution" evidence="2">
    <conflict type="erroneous initiation">
        <sequence resource="EMBL-CDS" id="AAP77135"/>
    </conflict>
</comment>
<name>RS18_HELHP</name>
<sequence length="84" mass="10395">MEKKKYSKRYCRYTEAKLEYIDYKDVEMLKHSLSERYKIMPRRLTGNTKRWQERVEVAIKRARHMALIPYIVDRKKVVENPFKI</sequence>
<dbReference type="EMBL" id="AE017125">
    <property type="protein sequence ID" value="AAP77135.1"/>
    <property type="status" value="ALT_INIT"/>
    <property type="molecule type" value="Genomic_DNA"/>
</dbReference>
<dbReference type="RefSeq" id="WP_011115380.1">
    <property type="nucleotide sequence ID" value="NC_004917.1"/>
</dbReference>
<dbReference type="SMR" id="Q7VIR6"/>
<dbReference type="STRING" id="235279.HH_0538"/>
<dbReference type="KEGG" id="hhe:HH_0538"/>
<dbReference type="eggNOG" id="COG0238">
    <property type="taxonomic scope" value="Bacteria"/>
</dbReference>
<dbReference type="HOGENOM" id="CLU_2954191_0_0_7"/>
<dbReference type="OrthoDB" id="9812008at2"/>
<dbReference type="Proteomes" id="UP000002495">
    <property type="component" value="Chromosome"/>
</dbReference>
<dbReference type="GO" id="GO:0022627">
    <property type="term" value="C:cytosolic small ribosomal subunit"/>
    <property type="evidence" value="ECO:0007669"/>
    <property type="project" value="TreeGrafter"/>
</dbReference>
<dbReference type="GO" id="GO:0070181">
    <property type="term" value="F:small ribosomal subunit rRNA binding"/>
    <property type="evidence" value="ECO:0007669"/>
    <property type="project" value="TreeGrafter"/>
</dbReference>
<dbReference type="GO" id="GO:0003735">
    <property type="term" value="F:structural constituent of ribosome"/>
    <property type="evidence" value="ECO:0007669"/>
    <property type="project" value="InterPro"/>
</dbReference>
<dbReference type="GO" id="GO:0006412">
    <property type="term" value="P:translation"/>
    <property type="evidence" value="ECO:0007669"/>
    <property type="project" value="UniProtKB-UniRule"/>
</dbReference>
<dbReference type="FunFam" id="4.10.640.10:FF:000005">
    <property type="entry name" value="30S ribosomal protein S18"/>
    <property type="match status" value="1"/>
</dbReference>
<dbReference type="Gene3D" id="4.10.640.10">
    <property type="entry name" value="Ribosomal protein S18"/>
    <property type="match status" value="1"/>
</dbReference>
<dbReference type="HAMAP" id="MF_00270">
    <property type="entry name" value="Ribosomal_bS18"/>
    <property type="match status" value="1"/>
</dbReference>
<dbReference type="InterPro" id="IPR001648">
    <property type="entry name" value="Ribosomal_bS18"/>
</dbReference>
<dbReference type="InterPro" id="IPR018275">
    <property type="entry name" value="Ribosomal_bS18_CS"/>
</dbReference>
<dbReference type="InterPro" id="IPR036870">
    <property type="entry name" value="Ribosomal_bS18_sf"/>
</dbReference>
<dbReference type="NCBIfam" id="TIGR00165">
    <property type="entry name" value="S18"/>
    <property type="match status" value="1"/>
</dbReference>
<dbReference type="PANTHER" id="PTHR13479">
    <property type="entry name" value="30S RIBOSOMAL PROTEIN S18"/>
    <property type="match status" value="1"/>
</dbReference>
<dbReference type="PANTHER" id="PTHR13479:SF40">
    <property type="entry name" value="SMALL RIBOSOMAL SUBUNIT PROTEIN BS18M"/>
    <property type="match status" value="1"/>
</dbReference>
<dbReference type="Pfam" id="PF01084">
    <property type="entry name" value="Ribosomal_S18"/>
    <property type="match status" value="1"/>
</dbReference>
<dbReference type="PRINTS" id="PR00974">
    <property type="entry name" value="RIBOSOMALS18"/>
</dbReference>
<dbReference type="SUPFAM" id="SSF46911">
    <property type="entry name" value="Ribosomal protein S18"/>
    <property type="match status" value="1"/>
</dbReference>
<dbReference type="PROSITE" id="PS00057">
    <property type="entry name" value="RIBOSOMAL_S18"/>
    <property type="match status" value="1"/>
</dbReference>
<reference key="1">
    <citation type="journal article" date="2003" name="Proc. Natl. Acad. Sci. U.S.A.">
        <title>The complete genome sequence of the carcinogenic bacterium Helicobacter hepaticus.</title>
        <authorList>
            <person name="Suerbaum S."/>
            <person name="Josenhans C."/>
            <person name="Sterzenbach T."/>
            <person name="Drescher B."/>
            <person name="Brandt P."/>
            <person name="Bell M."/>
            <person name="Droege M."/>
            <person name="Fartmann B."/>
            <person name="Fischer H.-P."/>
            <person name="Ge Z."/>
            <person name="Hoerster A."/>
            <person name="Holland R."/>
            <person name="Klein K."/>
            <person name="Koenig J."/>
            <person name="Macko L."/>
            <person name="Mendz G.L."/>
            <person name="Nyakatura G."/>
            <person name="Schauer D.B."/>
            <person name="Shen Z."/>
            <person name="Weber J."/>
            <person name="Frosch M."/>
            <person name="Fox J.G."/>
        </authorList>
    </citation>
    <scope>NUCLEOTIDE SEQUENCE [LARGE SCALE GENOMIC DNA]</scope>
    <source>
        <strain>ATCC 51449 / 3B1</strain>
    </source>
</reference>
<evidence type="ECO:0000255" key="1">
    <source>
        <dbReference type="HAMAP-Rule" id="MF_00270"/>
    </source>
</evidence>
<evidence type="ECO:0000305" key="2"/>
<protein>
    <recommendedName>
        <fullName evidence="1">Small ribosomal subunit protein bS18</fullName>
    </recommendedName>
    <alternativeName>
        <fullName evidence="2">30S ribosomal protein S18</fullName>
    </alternativeName>
</protein>
<feature type="chain" id="PRO_0000345483" description="Small ribosomal subunit protein bS18">
    <location>
        <begin position="1"/>
        <end position="84"/>
    </location>
</feature>